<keyword id="KW-0028">Amino-acid biosynthesis</keyword>
<keyword id="KW-0170">Cobalt</keyword>
<keyword id="KW-0220">Diaminopimelate biosynthesis</keyword>
<keyword id="KW-0378">Hydrolase</keyword>
<keyword id="KW-0457">Lysine biosynthesis</keyword>
<keyword id="KW-0479">Metal-binding</keyword>
<keyword id="KW-1185">Reference proteome</keyword>
<keyword id="KW-0862">Zinc</keyword>
<dbReference type="EC" id="3.5.1.18" evidence="1"/>
<dbReference type="EMBL" id="CP001013">
    <property type="protein sequence ID" value="ACB34783.1"/>
    <property type="molecule type" value="Genomic_DNA"/>
</dbReference>
<dbReference type="RefSeq" id="WP_012347539.1">
    <property type="nucleotide sequence ID" value="NC_010524.1"/>
</dbReference>
<dbReference type="SMR" id="B1Y6E7"/>
<dbReference type="STRING" id="395495.Lcho_2518"/>
<dbReference type="KEGG" id="lch:Lcho_2518"/>
<dbReference type="eggNOG" id="COG0624">
    <property type="taxonomic scope" value="Bacteria"/>
</dbReference>
<dbReference type="HOGENOM" id="CLU_021802_4_0_4"/>
<dbReference type="OrthoDB" id="9809784at2"/>
<dbReference type="UniPathway" id="UPA00034">
    <property type="reaction ID" value="UER00021"/>
</dbReference>
<dbReference type="Proteomes" id="UP000001693">
    <property type="component" value="Chromosome"/>
</dbReference>
<dbReference type="GO" id="GO:0008777">
    <property type="term" value="F:acetylornithine deacetylase activity"/>
    <property type="evidence" value="ECO:0007669"/>
    <property type="project" value="TreeGrafter"/>
</dbReference>
<dbReference type="GO" id="GO:0050897">
    <property type="term" value="F:cobalt ion binding"/>
    <property type="evidence" value="ECO:0007669"/>
    <property type="project" value="UniProtKB-UniRule"/>
</dbReference>
<dbReference type="GO" id="GO:0009014">
    <property type="term" value="F:succinyl-diaminopimelate desuccinylase activity"/>
    <property type="evidence" value="ECO:0007669"/>
    <property type="project" value="UniProtKB-UniRule"/>
</dbReference>
<dbReference type="GO" id="GO:0008270">
    <property type="term" value="F:zinc ion binding"/>
    <property type="evidence" value="ECO:0007669"/>
    <property type="project" value="UniProtKB-UniRule"/>
</dbReference>
<dbReference type="GO" id="GO:0019877">
    <property type="term" value="P:diaminopimelate biosynthetic process"/>
    <property type="evidence" value="ECO:0007669"/>
    <property type="project" value="UniProtKB-UniRule"/>
</dbReference>
<dbReference type="GO" id="GO:0006526">
    <property type="term" value="P:L-arginine biosynthetic process"/>
    <property type="evidence" value="ECO:0007669"/>
    <property type="project" value="TreeGrafter"/>
</dbReference>
<dbReference type="GO" id="GO:0009089">
    <property type="term" value="P:lysine biosynthetic process via diaminopimelate"/>
    <property type="evidence" value="ECO:0007669"/>
    <property type="project" value="UniProtKB-UniRule"/>
</dbReference>
<dbReference type="CDD" id="cd03891">
    <property type="entry name" value="M20_DapE_proteobac"/>
    <property type="match status" value="1"/>
</dbReference>
<dbReference type="FunFam" id="3.30.70.360:FF:000011">
    <property type="entry name" value="Succinyl-diaminopimelate desuccinylase"/>
    <property type="match status" value="1"/>
</dbReference>
<dbReference type="FunFam" id="3.40.630.10:FF:000005">
    <property type="entry name" value="Succinyl-diaminopimelate desuccinylase"/>
    <property type="match status" value="1"/>
</dbReference>
<dbReference type="Gene3D" id="3.40.630.10">
    <property type="entry name" value="Zn peptidases"/>
    <property type="match status" value="2"/>
</dbReference>
<dbReference type="HAMAP" id="MF_01690">
    <property type="entry name" value="DapE"/>
    <property type="match status" value="1"/>
</dbReference>
<dbReference type="InterPro" id="IPR036264">
    <property type="entry name" value="Bact_exopeptidase_dim_dom"/>
</dbReference>
<dbReference type="InterPro" id="IPR005941">
    <property type="entry name" value="DapE_proteobac"/>
</dbReference>
<dbReference type="InterPro" id="IPR002933">
    <property type="entry name" value="Peptidase_M20"/>
</dbReference>
<dbReference type="InterPro" id="IPR011650">
    <property type="entry name" value="Peptidase_M20_dimer"/>
</dbReference>
<dbReference type="InterPro" id="IPR050072">
    <property type="entry name" value="Peptidase_M20A"/>
</dbReference>
<dbReference type="NCBIfam" id="TIGR01246">
    <property type="entry name" value="dapE_proteo"/>
    <property type="match status" value="1"/>
</dbReference>
<dbReference type="NCBIfam" id="NF009557">
    <property type="entry name" value="PRK13009.1"/>
    <property type="match status" value="1"/>
</dbReference>
<dbReference type="PANTHER" id="PTHR43808">
    <property type="entry name" value="ACETYLORNITHINE DEACETYLASE"/>
    <property type="match status" value="1"/>
</dbReference>
<dbReference type="PANTHER" id="PTHR43808:SF31">
    <property type="entry name" value="N-ACETYL-L-CITRULLINE DEACETYLASE"/>
    <property type="match status" value="1"/>
</dbReference>
<dbReference type="Pfam" id="PF07687">
    <property type="entry name" value="M20_dimer"/>
    <property type="match status" value="1"/>
</dbReference>
<dbReference type="Pfam" id="PF01546">
    <property type="entry name" value="Peptidase_M20"/>
    <property type="match status" value="1"/>
</dbReference>
<dbReference type="SUPFAM" id="SSF55031">
    <property type="entry name" value="Bacterial exopeptidase dimerisation domain"/>
    <property type="match status" value="1"/>
</dbReference>
<dbReference type="SUPFAM" id="SSF53187">
    <property type="entry name" value="Zn-dependent exopeptidases"/>
    <property type="match status" value="1"/>
</dbReference>
<gene>
    <name evidence="1" type="primary">dapE</name>
    <name type="ordered locus">Lcho_2518</name>
</gene>
<name>DAPE_LEPCP</name>
<protein>
    <recommendedName>
        <fullName evidence="1">Succinyl-diaminopimelate desuccinylase</fullName>
        <shortName evidence="1">SDAP desuccinylase</shortName>
        <ecNumber evidence="1">3.5.1.18</ecNumber>
    </recommendedName>
    <alternativeName>
        <fullName evidence="1">N-succinyl-LL-2,6-diaminoheptanedioate amidohydrolase</fullName>
    </alternativeName>
</protein>
<comment type="function">
    <text evidence="1">Catalyzes the hydrolysis of N-succinyl-L,L-diaminopimelic acid (SDAP), forming succinate and LL-2,6-diaminopimelate (DAP), an intermediate involved in the bacterial biosynthesis of lysine and meso-diaminopimelic acid, an essential component of bacterial cell walls.</text>
</comment>
<comment type="catalytic activity">
    <reaction evidence="1">
        <text>N-succinyl-(2S,6S)-2,6-diaminopimelate + H2O = (2S,6S)-2,6-diaminopimelate + succinate</text>
        <dbReference type="Rhea" id="RHEA:22608"/>
        <dbReference type="ChEBI" id="CHEBI:15377"/>
        <dbReference type="ChEBI" id="CHEBI:30031"/>
        <dbReference type="ChEBI" id="CHEBI:57609"/>
        <dbReference type="ChEBI" id="CHEBI:58087"/>
        <dbReference type="EC" id="3.5.1.18"/>
    </reaction>
</comment>
<comment type="cofactor">
    <cofactor evidence="1">
        <name>Zn(2+)</name>
        <dbReference type="ChEBI" id="CHEBI:29105"/>
    </cofactor>
    <cofactor evidence="1">
        <name>Co(2+)</name>
        <dbReference type="ChEBI" id="CHEBI:48828"/>
    </cofactor>
    <text evidence="1">Binds 2 Zn(2+) or Co(2+) ions per subunit.</text>
</comment>
<comment type="pathway">
    <text evidence="1">Amino-acid biosynthesis; L-lysine biosynthesis via DAP pathway; LL-2,6-diaminopimelate from (S)-tetrahydrodipicolinate (succinylase route): step 3/3.</text>
</comment>
<comment type="subunit">
    <text evidence="1">Homodimer.</text>
</comment>
<comment type="similarity">
    <text evidence="1">Belongs to the peptidase M20A family. DapE subfamily.</text>
</comment>
<evidence type="ECO:0000255" key="1">
    <source>
        <dbReference type="HAMAP-Rule" id="MF_01690"/>
    </source>
</evidence>
<proteinExistence type="inferred from homology"/>
<reference key="1">
    <citation type="submission" date="2008-03" db="EMBL/GenBank/DDBJ databases">
        <title>Complete sequence of Leptothrix cholodnii SP-6.</title>
        <authorList>
            <consortium name="US DOE Joint Genome Institute"/>
            <person name="Copeland A."/>
            <person name="Lucas S."/>
            <person name="Lapidus A."/>
            <person name="Glavina del Rio T."/>
            <person name="Dalin E."/>
            <person name="Tice H."/>
            <person name="Bruce D."/>
            <person name="Goodwin L."/>
            <person name="Pitluck S."/>
            <person name="Chertkov O."/>
            <person name="Brettin T."/>
            <person name="Detter J.C."/>
            <person name="Han C."/>
            <person name="Kuske C.R."/>
            <person name="Schmutz J."/>
            <person name="Larimer F."/>
            <person name="Land M."/>
            <person name="Hauser L."/>
            <person name="Kyrpides N."/>
            <person name="Lykidis A."/>
            <person name="Emerson D."/>
            <person name="Richardson P."/>
        </authorList>
    </citation>
    <scope>NUCLEOTIDE SEQUENCE [LARGE SCALE GENOMIC DNA]</scope>
    <source>
        <strain>ATCC 51168 / LMG 8142 / SP-6</strain>
    </source>
</reference>
<accession>B1Y6E7</accession>
<organism>
    <name type="scientific">Leptothrix cholodnii (strain ATCC 51168 / LMG 8142 / SP-6)</name>
    <name type="common">Leptothrix discophora (strain SP-6)</name>
    <dbReference type="NCBI Taxonomy" id="395495"/>
    <lineage>
        <taxon>Bacteria</taxon>
        <taxon>Pseudomonadati</taxon>
        <taxon>Pseudomonadota</taxon>
        <taxon>Betaproteobacteria</taxon>
        <taxon>Burkholderiales</taxon>
        <taxon>Sphaerotilaceae</taxon>
        <taxon>Leptothrix</taxon>
    </lineage>
</organism>
<feature type="chain" id="PRO_0000375602" description="Succinyl-diaminopimelate desuccinylase">
    <location>
        <begin position="1"/>
        <end position="382"/>
    </location>
</feature>
<feature type="active site" evidence="1">
    <location>
        <position position="75"/>
    </location>
</feature>
<feature type="active site" description="Proton acceptor" evidence="1">
    <location>
        <position position="140"/>
    </location>
</feature>
<feature type="binding site" evidence="1">
    <location>
        <position position="73"/>
    </location>
    <ligand>
        <name>Zn(2+)</name>
        <dbReference type="ChEBI" id="CHEBI:29105"/>
        <label>1</label>
    </ligand>
</feature>
<feature type="binding site" evidence="1">
    <location>
        <position position="106"/>
    </location>
    <ligand>
        <name>Zn(2+)</name>
        <dbReference type="ChEBI" id="CHEBI:29105"/>
        <label>1</label>
    </ligand>
</feature>
<feature type="binding site" evidence="1">
    <location>
        <position position="106"/>
    </location>
    <ligand>
        <name>Zn(2+)</name>
        <dbReference type="ChEBI" id="CHEBI:29105"/>
        <label>2</label>
    </ligand>
</feature>
<feature type="binding site" evidence="1">
    <location>
        <position position="141"/>
    </location>
    <ligand>
        <name>Zn(2+)</name>
        <dbReference type="ChEBI" id="CHEBI:29105"/>
        <label>2</label>
    </ligand>
</feature>
<feature type="binding site" evidence="1">
    <location>
        <position position="169"/>
    </location>
    <ligand>
        <name>Zn(2+)</name>
        <dbReference type="ChEBI" id="CHEBI:29105"/>
        <label>1</label>
    </ligand>
</feature>
<feature type="binding site" evidence="1">
    <location>
        <position position="355"/>
    </location>
    <ligand>
        <name>Zn(2+)</name>
        <dbReference type="ChEBI" id="CHEBI:29105"/>
        <label>2</label>
    </ligand>
</feature>
<sequence length="382" mass="41013">MHLPTLSLVEELIARRSVTPDDAGCQALIAARLAALGFEIHALPHGPADARVDNLWAIRRGQGDGPTLVLAGHTDVVPTGPLERWHSDPFVPSHRAGLLYGRGAADMKTSLAAMVVAVEEFVAAHPVHRGSVAFLLTSDEEGPAVDGTVKVCEWLAARGERLDACIVGEPTSVRQLGDMIKNGRRGSLSGRLTVVGQQGHIAYPHLARNPIHLAAPALAELAQQRWDDGNEHFPPTSWQMSNIHAGTGATNVIPGELVVDFNFRFSTESTPESLQQQVHALLDRHGLEHRIAWTLGGRPFLTRPGSLTDALSQAITAVTGLRTELSTTGGTSDGRFIAQICPQVVEFGPVNATIHQVDEHCEVAALGPLKDIYRRTLEAMLA</sequence>